<dbReference type="EMBL" id="AAHF01000008">
    <property type="protein sequence ID" value="EAL87494.1"/>
    <property type="molecule type" value="Genomic_DNA"/>
</dbReference>
<dbReference type="RefSeq" id="XP_749532.1">
    <property type="nucleotide sequence ID" value="XM_744439.1"/>
</dbReference>
<dbReference type="SMR" id="Q4WHW1"/>
<dbReference type="FunCoup" id="Q4WHW1">
    <property type="interactions" value="89"/>
</dbReference>
<dbReference type="STRING" id="330879.Q4WHW1"/>
<dbReference type="EnsemblFungi" id="EAL87494">
    <property type="protein sequence ID" value="EAL87494"/>
    <property type="gene ID" value="AFUA_2G04000"/>
</dbReference>
<dbReference type="GeneID" id="3506930"/>
<dbReference type="KEGG" id="afm:AFUA_2G04000"/>
<dbReference type="VEuPathDB" id="FungiDB:Afu2g04000"/>
<dbReference type="eggNOG" id="KOG0909">
    <property type="taxonomic scope" value="Eukaryota"/>
</dbReference>
<dbReference type="HOGENOM" id="CLU_031058_1_0_1"/>
<dbReference type="InParanoid" id="Q4WHW1"/>
<dbReference type="OMA" id="AWDKPRL"/>
<dbReference type="OrthoDB" id="409136at2759"/>
<dbReference type="Proteomes" id="UP000002530">
    <property type="component" value="Chromosome 2"/>
</dbReference>
<dbReference type="GO" id="GO:0005829">
    <property type="term" value="C:cytosol"/>
    <property type="evidence" value="ECO:0000318"/>
    <property type="project" value="GO_Central"/>
</dbReference>
<dbReference type="GO" id="GO:0005634">
    <property type="term" value="C:nucleus"/>
    <property type="evidence" value="ECO:0000318"/>
    <property type="project" value="GO_Central"/>
</dbReference>
<dbReference type="GO" id="GO:0046872">
    <property type="term" value="F:metal ion binding"/>
    <property type="evidence" value="ECO:0007669"/>
    <property type="project" value="UniProtKB-KW"/>
</dbReference>
<dbReference type="GO" id="GO:0000224">
    <property type="term" value="F:peptide-N4-(N-acetyl-beta-glucosaminyl)asparagine amidase activity"/>
    <property type="evidence" value="ECO:0000318"/>
    <property type="project" value="GO_Central"/>
</dbReference>
<dbReference type="GO" id="GO:0006516">
    <property type="term" value="P:glycoprotein catabolic process"/>
    <property type="evidence" value="ECO:0000318"/>
    <property type="project" value="GO_Central"/>
</dbReference>
<dbReference type="FunFam" id="3.10.620.30:FF:000004">
    <property type="entry name" value="Peptidase (PNG1)"/>
    <property type="match status" value="1"/>
</dbReference>
<dbReference type="FunFam" id="2.20.25.10:FF:000011">
    <property type="entry name" value="peptide-N(4)-(N-acetyl-beta- glucosaminyl)asparagine amidase"/>
    <property type="match status" value="1"/>
</dbReference>
<dbReference type="Gene3D" id="2.20.25.10">
    <property type="match status" value="1"/>
</dbReference>
<dbReference type="Gene3D" id="3.10.620.30">
    <property type="match status" value="1"/>
</dbReference>
<dbReference type="InterPro" id="IPR038765">
    <property type="entry name" value="Papain-like_cys_pep_sf"/>
</dbReference>
<dbReference type="InterPro" id="IPR050883">
    <property type="entry name" value="PNGase"/>
</dbReference>
<dbReference type="InterPro" id="IPR002931">
    <property type="entry name" value="Transglutaminase-like"/>
</dbReference>
<dbReference type="PANTHER" id="PTHR12143">
    <property type="entry name" value="PEPTIDE N-GLYCANASE PNGASE -RELATED"/>
    <property type="match status" value="1"/>
</dbReference>
<dbReference type="PANTHER" id="PTHR12143:SF19">
    <property type="entry name" value="PEPTIDE-N(4)-(N-ACETYL-BETA-GLUCOSAMINYL)ASPARAGINE AMIDASE"/>
    <property type="match status" value="1"/>
</dbReference>
<dbReference type="Pfam" id="PF01841">
    <property type="entry name" value="Transglut_core"/>
    <property type="match status" value="1"/>
</dbReference>
<dbReference type="SMART" id="SM00460">
    <property type="entry name" value="TGc"/>
    <property type="match status" value="1"/>
</dbReference>
<dbReference type="SUPFAM" id="SSF54001">
    <property type="entry name" value="Cysteine proteinases"/>
    <property type="match status" value="1"/>
</dbReference>
<name>PNG1_ASPFU</name>
<proteinExistence type="inferred from homology"/>
<feature type="chain" id="PRO_0000248984" description="Protein png1">
    <location>
        <begin position="1"/>
        <end position="455"/>
    </location>
</feature>
<feature type="region of interest" description="Disordered" evidence="2">
    <location>
        <begin position="1"/>
        <end position="110"/>
    </location>
</feature>
<feature type="region of interest" description="Disordered" evidence="2">
    <location>
        <begin position="408"/>
        <end position="455"/>
    </location>
</feature>
<feature type="compositionally biased region" description="Low complexity" evidence="2">
    <location>
        <begin position="38"/>
        <end position="53"/>
    </location>
</feature>
<feature type="compositionally biased region" description="Pro residues" evidence="2">
    <location>
        <begin position="59"/>
        <end position="73"/>
    </location>
</feature>
<feature type="compositionally biased region" description="Low complexity" evidence="2">
    <location>
        <begin position="74"/>
        <end position="98"/>
    </location>
</feature>
<feature type="binding site" evidence="1">
    <location>
        <position position="199"/>
    </location>
    <ligand>
        <name>Zn(2+)</name>
        <dbReference type="ChEBI" id="CHEBI:29105"/>
    </ligand>
</feature>
<feature type="binding site" evidence="1">
    <location>
        <position position="202"/>
    </location>
    <ligand>
        <name>Zn(2+)</name>
        <dbReference type="ChEBI" id="CHEBI:29105"/>
    </ligand>
</feature>
<feature type="binding site" evidence="1">
    <location>
        <position position="231"/>
    </location>
    <ligand>
        <name>Zn(2+)</name>
        <dbReference type="ChEBI" id="CHEBI:29105"/>
    </ligand>
</feature>
<feature type="binding site" evidence="1">
    <location>
        <position position="236"/>
    </location>
    <ligand>
        <name>Zn(2+)</name>
        <dbReference type="ChEBI" id="CHEBI:29105"/>
    </ligand>
</feature>
<comment type="similarity">
    <text evidence="3">Belongs to the transglutaminase-like superfamily. PNGase family.</text>
</comment>
<comment type="caution">
    <text evidence="3">Although strongly related to the peptide:N-glycanase enzyme, it lacks the conserved active site Cys in position 261, which is replaced by a Val residue suggesting that it has no activity.</text>
</comment>
<evidence type="ECO:0000250" key="1"/>
<evidence type="ECO:0000256" key="2">
    <source>
        <dbReference type="SAM" id="MobiDB-lite"/>
    </source>
</evidence>
<evidence type="ECO:0000305" key="3"/>
<protein>
    <recommendedName>
        <fullName>Protein png1</fullName>
    </recommendedName>
</protein>
<keyword id="KW-0479">Metal-binding</keyword>
<keyword id="KW-1185">Reference proteome</keyword>
<keyword id="KW-0862">Zinc</keyword>
<accession>Q4WHW1</accession>
<gene>
    <name type="primary">png1</name>
    <name type="ORF">AFUA_2G04000</name>
</gene>
<reference key="1">
    <citation type="journal article" date="2005" name="Nature">
        <title>Genomic sequence of the pathogenic and allergenic filamentous fungus Aspergillus fumigatus.</title>
        <authorList>
            <person name="Nierman W.C."/>
            <person name="Pain A."/>
            <person name="Anderson M.J."/>
            <person name="Wortman J.R."/>
            <person name="Kim H.S."/>
            <person name="Arroyo J."/>
            <person name="Berriman M."/>
            <person name="Abe K."/>
            <person name="Archer D.B."/>
            <person name="Bermejo C."/>
            <person name="Bennett J.W."/>
            <person name="Bowyer P."/>
            <person name="Chen D."/>
            <person name="Collins M."/>
            <person name="Coulsen R."/>
            <person name="Davies R."/>
            <person name="Dyer P.S."/>
            <person name="Farman M.L."/>
            <person name="Fedorova N."/>
            <person name="Fedorova N.D."/>
            <person name="Feldblyum T.V."/>
            <person name="Fischer R."/>
            <person name="Fosker N."/>
            <person name="Fraser A."/>
            <person name="Garcia J.L."/>
            <person name="Garcia M.J."/>
            <person name="Goble A."/>
            <person name="Goldman G.H."/>
            <person name="Gomi K."/>
            <person name="Griffith-Jones S."/>
            <person name="Gwilliam R."/>
            <person name="Haas B.J."/>
            <person name="Haas H."/>
            <person name="Harris D.E."/>
            <person name="Horiuchi H."/>
            <person name="Huang J."/>
            <person name="Humphray S."/>
            <person name="Jimenez J."/>
            <person name="Keller N."/>
            <person name="Khouri H."/>
            <person name="Kitamoto K."/>
            <person name="Kobayashi T."/>
            <person name="Konzack S."/>
            <person name="Kulkarni R."/>
            <person name="Kumagai T."/>
            <person name="Lafton A."/>
            <person name="Latge J.-P."/>
            <person name="Li W."/>
            <person name="Lord A."/>
            <person name="Lu C."/>
            <person name="Majoros W.H."/>
            <person name="May G.S."/>
            <person name="Miller B.L."/>
            <person name="Mohamoud Y."/>
            <person name="Molina M."/>
            <person name="Monod M."/>
            <person name="Mouyna I."/>
            <person name="Mulligan S."/>
            <person name="Murphy L.D."/>
            <person name="O'Neil S."/>
            <person name="Paulsen I."/>
            <person name="Penalva M.A."/>
            <person name="Pertea M."/>
            <person name="Price C."/>
            <person name="Pritchard B.L."/>
            <person name="Quail M.A."/>
            <person name="Rabbinowitsch E."/>
            <person name="Rawlins N."/>
            <person name="Rajandream M.A."/>
            <person name="Reichard U."/>
            <person name="Renauld H."/>
            <person name="Robson G.D."/>
            <person name="Rodriguez de Cordoba S."/>
            <person name="Rodriguez-Pena J.M."/>
            <person name="Ronning C.M."/>
            <person name="Rutter S."/>
            <person name="Salzberg S.L."/>
            <person name="Sanchez M."/>
            <person name="Sanchez-Ferrero J.C."/>
            <person name="Saunders D."/>
            <person name="Seeger K."/>
            <person name="Squares R."/>
            <person name="Squares S."/>
            <person name="Takeuchi M."/>
            <person name="Tekaia F."/>
            <person name="Turner G."/>
            <person name="Vazquez de Aldana C.R."/>
            <person name="Weidman J."/>
            <person name="White O."/>
            <person name="Woodward J.R."/>
            <person name="Yu J.-H."/>
            <person name="Fraser C.M."/>
            <person name="Galagan J.E."/>
            <person name="Asai K."/>
            <person name="Machida M."/>
            <person name="Hall N."/>
            <person name="Barrell B.G."/>
            <person name="Denning D.W."/>
        </authorList>
    </citation>
    <scope>NUCLEOTIDE SEQUENCE [LARGE SCALE GENOMIC DNA]</scope>
    <source>
        <strain>ATCC MYA-4609 / CBS 101355 / FGSC A1100 / Af293</strain>
    </source>
</reference>
<organism>
    <name type="scientific">Aspergillus fumigatus (strain ATCC MYA-4609 / CBS 101355 / FGSC A1100 / Af293)</name>
    <name type="common">Neosartorya fumigata</name>
    <dbReference type="NCBI Taxonomy" id="330879"/>
    <lineage>
        <taxon>Eukaryota</taxon>
        <taxon>Fungi</taxon>
        <taxon>Dikarya</taxon>
        <taxon>Ascomycota</taxon>
        <taxon>Pezizomycotina</taxon>
        <taxon>Eurotiomycetes</taxon>
        <taxon>Eurotiomycetidae</taxon>
        <taxon>Eurotiales</taxon>
        <taxon>Aspergillaceae</taxon>
        <taxon>Aspergillus</taxon>
        <taxon>Aspergillus subgen. Fumigati</taxon>
    </lineage>
</organism>
<sequence>MTDGRQQHTRRAPTTDIYDATELTRAFEQLMRTKRFNSLQEQSRSRSRTQSPSHAQPYHTPPHPSRAPPPPPTGAHYPSSQSPSQQHQQHQLPASSSLRNLPVFPSPPRDQQSLKFRNLLHVLSVTPTKYENPGLLDEALSLIPLDRLYSEAEEESQIMQAQAASVGGKPEWGYQDCVIRALLRWFKNSFFQFVNNPPCSRCLMPTIAQGMTPPTPDETARGATRVELYRCSESTCGSYERFPRYSDVWQLLQSRRGRVGEWANCFSMFCRALGGRVRWVWNSEDYVWTEVYSEHQRRWVHVDACEGAWDQPRLYTEGWGRKLSYCIAFSIDGATDVTRRYVRSPVKHGAPRNRVPEEVLVWIIHEIRKKRRESMSKTDQRRLMKEDEREEKELRAYMASALAAEINNLIPREQTSGRPGEQKTPASMQDTPVDWVAAQQMGPGQSGPDRSQDGR</sequence>